<keyword id="KW-0238">DNA-binding</keyword>
<keyword id="KW-0614">Plasmid</keyword>
<proteinExistence type="inferred from homology"/>
<name>SSB1_XYLFA</name>
<dbReference type="EMBL" id="AE003851">
    <property type="protein sequence ID" value="AAF85629.1"/>
    <property type="molecule type" value="Genomic_DNA"/>
</dbReference>
<dbReference type="PIR" id="D82868">
    <property type="entry name" value="D82868"/>
</dbReference>
<dbReference type="RefSeq" id="WP_010895253.1">
    <property type="nucleotide sequence ID" value="NC_002490.1"/>
</dbReference>
<dbReference type="SMR" id="Q9PHE7"/>
<dbReference type="KEGG" id="xfa:XF_a0061"/>
<dbReference type="eggNOG" id="COG0629">
    <property type="taxonomic scope" value="Bacteria"/>
</dbReference>
<dbReference type="HOGENOM" id="CLU_078758_2_0_6"/>
<dbReference type="Proteomes" id="UP000000812">
    <property type="component" value="Plasmid pXF51"/>
</dbReference>
<dbReference type="GO" id="GO:0009295">
    <property type="term" value="C:nucleoid"/>
    <property type="evidence" value="ECO:0007669"/>
    <property type="project" value="TreeGrafter"/>
</dbReference>
<dbReference type="GO" id="GO:0003697">
    <property type="term" value="F:single-stranded DNA binding"/>
    <property type="evidence" value="ECO:0007669"/>
    <property type="project" value="UniProtKB-UniRule"/>
</dbReference>
<dbReference type="GO" id="GO:0006260">
    <property type="term" value="P:DNA replication"/>
    <property type="evidence" value="ECO:0007669"/>
    <property type="project" value="InterPro"/>
</dbReference>
<dbReference type="CDD" id="cd04496">
    <property type="entry name" value="SSB_OBF"/>
    <property type="match status" value="1"/>
</dbReference>
<dbReference type="Gene3D" id="2.40.50.140">
    <property type="entry name" value="Nucleic acid-binding proteins"/>
    <property type="match status" value="1"/>
</dbReference>
<dbReference type="HAMAP" id="MF_00984">
    <property type="entry name" value="SSB"/>
    <property type="match status" value="1"/>
</dbReference>
<dbReference type="InterPro" id="IPR012340">
    <property type="entry name" value="NA-bd_OB-fold"/>
</dbReference>
<dbReference type="InterPro" id="IPR000424">
    <property type="entry name" value="Primosome_PriB/ssb"/>
</dbReference>
<dbReference type="InterPro" id="IPR011344">
    <property type="entry name" value="ssDNA-bd"/>
</dbReference>
<dbReference type="NCBIfam" id="TIGR00621">
    <property type="entry name" value="ssb"/>
    <property type="match status" value="1"/>
</dbReference>
<dbReference type="PANTHER" id="PTHR10302">
    <property type="entry name" value="SINGLE-STRANDED DNA-BINDING PROTEIN"/>
    <property type="match status" value="1"/>
</dbReference>
<dbReference type="PANTHER" id="PTHR10302:SF27">
    <property type="entry name" value="SINGLE-STRANDED DNA-BINDING PROTEIN"/>
    <property type="match status" value="1"/>
</dbReference>
<dbReference type="Pfam" id="PF00436">
    <property type="entry name" value="SSB"/>
    <property type="match status" value="1"/>
</dbReference>
<dbReference type="PIRSF" id="PIRSF002070">
    <property type="entry name" value="SSB"/>
    <property type="match status" value="1"/>
</dbReference>
<dbReference type="SUPFAM" id="SSF50249">
    <property type="entry name" value="Nucleic acid-binding proteins"/>
    <property type="match status" value="1"/>
</dbReference>
<dbReference type="PROSITE" id="PS50935">
    <property type="entry name" value="SSB"/>
    <property type="match status" value="1"/>
</dbReference>
<gene>
    <name type="primary">ssb1</name>
    <name type="ordered locus">XF_a0061</name>
</gene>
<sequence>MASLNKMQLIGNLGADPDIRYMQDGTPTVTVSVATTDTWKDKDTGNKEEKTEWHRVVFFGGLAEIVGEFLKKGSQIYVEGALRSRNWTDKEGNKRYTTEIMAKEMQMLGKKQDNNKVGNARHGDALPADEDDYYDF</sequence>
<organism>
    <name type="scientific">Xylella fastidiosa (strain 9a5c)</name>
    <dbReference type="NCBI Taxonomy" id="160492"/>
    <lineage>
        <taxon>Bacteria</taxon>
        <taxon>Pseudomonadati</taxon>
        <taxon>Pseudomonadota</taxon>
        <taxon>Gammaproteobacteria</taxon>
        <taxon>Lysobacterales</taxon>
        <taxon>Lysobacteraceae</taxon>
        <taxon>Xylella</taxon>
    </lineage>
</organism>
<comment type="subunit">
    <text evidence="1">Homotetramer.</text>
</comment>
<reference key="1">
    <citation type="journal article" date="2000" name="Nature">
        <title>The genome sequence of the plant pathogen Xylella fastidiosa.</title>
        <authorList>
            <person name="Simpson A.J.G."/>
            <person name="Reinach F.C."/>
            <person name="Arruda P."/>
            <person name="Abreu F.A."/>
            <person name="Acencio M."/>
            <person name="Alvarenga R."/>
            <person name="Alves L.M.C."/>
            <person name="Araya J.E."/>
            <person name="Baia G.S."/>
            <person name="Baptista C.S."/>
            <person name="Barros M.H."/>
            <person name="Bonaccorsi E.D."/>
            <person name="Bordin S."/>
            <person name="Bove J.M."/>
            <person name="Briones M.R.S."/>
            <person name="Bueno M.R.P."/>
            <person name="Camargo A.A."/>
            <person name="Camargo L.E.A."/>
            <person name="Carraro D.M."/>
            <person name="Carrer H."/>
            <person name="Colauto N.B."/>
            <person name="Colombo C."/>
            <person name="Costa F.F."/>
            <person name="Costa M.C.R."/>
            <person name="Costa-Neto C.M."/>
            <person name="Coutinho L.L."/>
            <person name="Cristofani M."/>
            <person name="Dias-Neto E."/>
            <person name="Docena C."/>
            <person name="El-Dorry H."/>
            <person name="Facincani A.P."/>
            <person name="Ferreira A.J.S."/>
            <person name="Ferreira V.C.A."/>
            <person name="Ferro J.A."/>
            <person name="Fraga J.S."/>
            <person name="Franca S.C."/>
            <person name="Franco M.C."/>
            <person name="Frohme M."/>
            <person name="Furlan L.R."/>
            <person name="Garnier M."/>
            <person name="Goldman G.H."/>
            <person name="Goldman M.H.S."/>
            <person name="Gomes S.L."/>
            <person name="Gruber A."/>
            <person name="Ho P.L."/>
            <person name="Hoheisel J.D."/>
            <person name="Junqueira M.L."/>
            <person name="Kemper E.L."/>
            <person name="Kitajima J.P."/>
            <person name="Krieger J.E."/>
            <person name="Kuramae E.E."/>
            <person name="Laigret F."/>
            <person name="Lambais M.R."/>
            <person name="Leite L.C.C."/>
            <person name="Lemos E.G.M."/>
            <person name="Lemos M.V.F."/>
            <person name="Lopes S.A."/>
            <person name="Lopes C.R."/>
            <person name="Machado J.A."/>
            <person name="Machado M.A."/>
            <person name="Madeira A.M.B.N."/>
            <person name="Madeira H.M.F."/>
            <person name="Marino C.L."/>
            <person name="Marques M.V."/>
            <person name="Martins E.A.L."/>
            <person name="Martins E.M.F."/>
            <person name="Matsukuma A.Y."/>
            <person name="Menck C.F.M."/>
            <person name="Miracca E.C."/>
            <person name="Miyaki C.Y."/>
            <person name="Monteiro-Vitorello C.B."/>
            <person name="Moon D.H."/>
            <person name="Nagai M.A."/>
            <person name="Nascimento A.L.T.O."/>
            <person name="Netto L.E.S."/>
            <person name="Nhani A. Jr."/>
            <person name="Nobrega F.G."/>
            <person name="Nunes L.R."/>
            <person name="Oliveira M.A."/>
            <person name="de Oliveira M.C."/>
            <person name="de Oliveira R.C."/>
            <person name="Palmieri D.A."/>
            <person name="Paris A."/>
            <person name="Peixoto B.R."/>
            <person name="Pereira G.A.G."/>
            <person name="Pereira H.A. Jr."/>
            <person name="Pesquero J.B."/>
            <person name="Quaggio R.B."/>
            <person name="Roberto P.G."/>
            <person name="Rodrigues V."/>
            <person name="de Rosa A.J.M."/>
            <person name="de Rosa V.E. Jr."/>
            <person name="de Sa R.G."/>
            <person name="Santelli R.V."/>
            <person name="Sawasaki H.E."/>
            <person name="da Silva A.C.R."/>
            <person name="da Silva A.M."/>
            <person name="da Silva F.R."/>
            <person name="Silva W.A. Jr."/>
            <person name="da Silveira J.F."/>
            <person name="Silvestri M.L.Z."/>
            <person name="Siqueira W.J."/>
            <person name="de Souza A.A."/>
            <person name="de Souza A.P."/>
            <person name="Terenzi M.F."/>
            <person name="Truffi D."/>
            <person name="Tsai S.M."/>
            <person name="Tsuhako M.H."/>
            <person name="Vallada H."/>
            <person name="Van Sluys M.A."/>
            <person name="Verjovski-Almeida S."/>
            <person name="Vettore A.L."/>
            <person name="Zago M.A."/>
            <person name="Zatz M."/>
            <person name="Meidanis J."/>
            <person name="Setubal J.C."/>
        </authorList>
    </citation>
    <scope>NUCLEOTIDE SEQUENCE [LARGE SCALE GENOMIC DNA]</scope>
    <source>
        <strain>9a5c</strain>
    </source>
</reference>
<evidence type="ECO:0000255" key="1">
    <source>
        <dbReference type="HAMAP-Rule" id="MF_00984"/>
    </source>
</evidence>
<evidence type="ECO:0000256" key="2">
    <source>
        <dbReference type="SAM" id="MobiDB-lite"/>
    </source>
</evidence>
<protein>
    <recommendedName>
        <fullName evidence="1">Single-stranded DNA-binding protein 1</fullName>
        <shortName evidence="1">SSB 1</shortName>
    </recommendedName>
</protein>
<geneLocation type="plasmid">
    <name>pXF51</name>
</geneLocation>
<accession>Q9PHE7</accession>
<feature type="chain" id="PRO_0000096143" description="Single-stranded DNA-binding protein 1">
    <location>
        <begin position="1"/>
        <end position="136"/>
    </location>
</feature>
<feature type="domain" description="SSB" evidence="1">
    <location>
        <begin position="4"/>
        <end position="109"/>
    </location>
</feature>
<feature type="region of interest" description="Disordered" evidence="2">
    <location>
        <begin position="109"/>
        <end position="136"/>
    </location>
</feature>
<feature type="compositionally biased region" description="Acidic residues" evidence="2">
    <location>
        <begin position="127"/>
        <end position="136"/>
    </location>
</feature>